<comment type="subcellular location">
    <subcellularLocation>
        <location evidence="1">Cell membrane</location>
        <topology evidence="1">Multi-pass membrane protein</topology>
    </subcellularLocation>
</comment>
<comment type="similarity">
    <text evidence="1">Belongs to the UPF0353 family.</text>
</comment>
<proteinExistence type="inferred from homology"/>
<reference key="1">
    <citation type="journal article" date="1998" name="Microbiology">
        <title>Determination of a 15437 bp nucleotide sequence around the inhA gene of Mycobacterium avium and similarity analysis of the products of putative ORFs.</title>
        <authorList>
            <person name="Labo M."/>
            <person name="Gusberti L."/>
            <person name="de Rossi E."/>
            <person name="Speziale P."/>
            <person name="Riccardi G."/>
        </authorList>
    </citation>
    <scope>NUCLEOTIDE SEQUENCE [GENOMIC DNA]</scope>
    <source>
        <strain>GIR10</strain>
    </source>
</reference>
<sequence>MSLPFLGPMSLSGFEHSWFFLFLLVVAGLAALYILMQLARHGRMLRFANMELLESVAPKRPSTWRHLPAILLVASLVLFTIAMAGPTNDVRIPRNRAVVMLVIDVSQSMRATDVAPNRMAAAQEAAKQFADELTPGINLGLIAYAGTATVLVSPTTNREATKNALDKLQFADRTATGEGIFTALQVQAIATVGAVIAGDKPPPARIVLFSDGKETMPTNPDNPKGAFTAARTAKDQGVPISTISFGTPYGFVEINDQRQPVPVDDETLKKVAQLSGGNAYNARSLQELKSVYATLQQQIGYETIKGDASVGWVRLGALVLRLAADALLINRRLPT</sequence>
<protein>
    <recommendedName>
        <fullName evidence="1">UPF0353 protein MAV335</fullName>
    </recommendedName>
</protein>
<feature type="chain" id="PRO_0000057642" description="UPF0353 protein MAV335">
    <location>
        <begin position="1"/>
        <end position="335"/>
    </location>
</feature>
<feature type="transmembrane region" description="Helical" evidence="1">
    <location>
        <begin position="18"/>
        <end position="38"/>
    </location>
</feature>
<feature type="transmembrane region" description="Helical" evidence="1">
    <location>
        <begin position="67"/>
        <end position="87"/>
    </location>
</feature>
<feature type="transmembrane region" description="Helical" evidence="1">
    <location>
        <begin position="309"/>
        <end position="329"/>
    </location>
</feature>
<feature type="domain" description="VWFA" evidence="1">
    <location>
        <begin position="98"/>
        <end position="295"/>
    </location>
</feature>
<keyword id="KW-1003">Cell membrane</keyword>
<keyword id="KW-0472">Membrane</keyword>
<keyword id="KW-0812">Transmembrane</keyword>
<keyword id="KW-1133">Transmembrane helix</keyword>
<dbReference type="EMBL" id="AF002133">
    <property type="protein sequence ID" value="AAC46199.1"/>
    <property type="molecule type" value="Genomic_DNA"/>
</dbReference>
<dbReference type="SMR" id="O07395"/>
<dbReference type="GO" id="GO:0005886">
    <property type="term" value="C:plasma membrane"/>
    <property type="evidence" value="ECO:0007669"/>
    <property type="project" value="UniProtKB-SubCell"/>
</dbReference>
<dbReference type="CDD" id="cd00198">
    <property type="entry name" value="vWFA"/>
    <property type="match status" value="1"/>
</dbReference>
<dbReference type="FunFam" id="3.40.50.410:FF:000078">
    <property type="entry name" value="UPF0353 protein RN09_1826"/>
    <property type="match status" value="1"/>
</dbReference>
<dbReference type="Gene3D" id="3.40.50.410">
    <property type="entry name" value="von Willebrand factor, type A domain"/>
    <property type="match status" value="1"/>
</dbReference>
<dbReference type="HAMAP" id="MF_01340">
    <property type="entry name" value="UPF0353"/>
    <property type="match status" value="1"/>
</dbReference>
<dbReference type="InterPro" id="IPR022933">
    <property type="entry name" value="UPF0353"/>
</dbReference>
<dbReference type="InterPro" id="IPR050768">
    <property type="entry name" value="UPF0353/GerABKA_families"/>
</dbReference>
<dbReference type="InterPro" id="IPR002035">
    <property type="entry name" value="VWF_A"/>
</dbReference>
<dbReference type="InterPro" id="IPR036465">
    <property type="entry name" value="vWFA_dom_sf"/>
</dbReference>
<dbReference type="NCBIfam" id="NF010238">
    <property type="entry name" value="PRK13685.1"/>
    <property type="match status" value="1"/>
</dbReference>
<dbReference type="PANTHER" id="PTHR22550:SF5">
    <property type="entry name" value="LEUCINE ZIPPER PROTEIN 4"/>
    <property type="match status" value="1"/>
</dbReference>
<dbReference type="PANTHER" id="PTHR22550">
    <property type="entry name" value="SPORE GERMINATION PROTEIN"/>
    <property type="match status" value="1"/>
</dbReference>
<dbReference type="Pfam" id="PF13519">
    <property type="entry name" value="VWA_2"/>
    <property type="match status" value="1"/>
</dbReference>
<dbReference type="SMART" id="SM00327">
    <property type="entry name" value="VWA"/>
    <property type="match status" value="1"/>
</dbReference>
<dbReference type="SUPFAM" id="SSF53300">
    <property type="entry name" value="vWA-like"/>
    <property type="match status" value="1"/>
</dbReference>
<dbReference type="PROSITE" id="PS50234">
    <property type="entry name" value="VWFA"/>
    <property type="match status" value="1"/>
</dbReference>
<organism>
    <name type="scientific">Mycobacterium avium</name>
    <dbReference type="NCBI Taxonomy" id="1764"/>
    <lineage>
        <taxon>Bacteria</taxon>
        <taxon>Bacillati</taxon>
        <taxon>Actinomycetota</taxon>
        <taxon>Actinomycetes</taxon>
        <taxon>Mycobacteriales</taxon>
        <taxon>Mycobacteriaceae</taxon>
        <taxon>Mycobacterium</taxon>
        <taxon>Mycobacterium avium complex (MAC)</taxon>
    </lineage>
</organism>
<evidence type="ECO:0000255" key="1">
    <source>
        <dbReference type="HAMAP-Rule" id="MF_01340"/>
    </source>
</evidence>
<name>Y335_MYCAV</name>
<accession>O07395</accession>